<comment type="function">
    <text evidence="1">Attaches a formyl group to the free amino group of methionyl-tRNA(fMet). The formyl group appears to play a dual role in the initiator identity of N-formylmethionyl-tRNA by promoting its recognition by IF2 and preventing the misappropriation of this tRNA by the elongation apparatus.</text>
</comment>
<comment type="catalytic activity">
    <reaction evidence="1">
        <text>L-methionyl-tRNA(fMet) + (6R)-10-formyltetrahydrofolate = N-formyl-L-methionyl-tRNA(fMet) + (6S)-5,6,7,8-tetrahydrofolate + H(+)</text>
        <dbReference type="Rhea" id="RHEA:24380"/>
        <dbReference type="Rhea" id="RHEA-COMP:9952"/>
        <dbReference type="Rhea" id="RHEA-COMP:9953"/>
        <dbReference type="ChEBI" id="CHEBI:15378"/>
        <dbReference type="ChEBI" id="CHEBI:57453"/>
        <dbReference type="ChEBI" id="CHEBI:78530"/>
        <dbReference type="ChEBI" id="CHEBI:78844"/>
        <dbReference type="ChEBI" id="CHEBI:195366"/>
        <dbReference type="EC" id="2.1.2.9"/>
    </reaction>
</comment>
<comment type="similarity">
    <text evidence="1">Belongs to the Fmt family.</text>
</comment>
<feature type="chain" id="PRO_1000077292" description="Methionyl-tRNA formyltransferase">
    <location>
        <begin position="1"/>
        <end position="312"/>
    </location>
</feature>
<feature type="binding site" evidence="1">
    <location>
        <begin position="109"/>
        <end position="112"/>
    </location>
    <ligand>
        <name>(6S)-5,6,7,8-tetrahydrofolate</name>
        <dbReference type="ChEBI" id="CHEBI:57453"/>
    </ligand>
</feature>
<evidence type="ECO:0000255" key="1">
    <source>
        <dbReference type="HAMAP-Rule" id="MF_00182"/>
    </source>
</evidence>
<accession>B0T1S7</accession>
<sequence length="312" mass="32796">MRIAFLGTPEFSVACLAELVAAGHEIACVYSQPPAPRGRGQDLKPSPVHAFAESLGLPVRTPVSMKTAEEIEAFRALDLDAAVVVAFGQILVRDVLEAPRLGCFNLHASLLPRWRGAAPIQRAIMAGDAVTGVQVMRMSEGLDEGPVLMGEQVRIDALETAGTLHDKLAAVGSRMLPVALAAIERGGARETPQSEEGVTYAKKIKAAEARIDWTRSAAEVDRHIRGLSPFPGAWFEAPSEKGSVRVKALLSRVEDGEGAPGVALDDALLIACGANGEGGAVRLLKAQREGKGAQDAEVFLRGFPLAAGTALA</sequence>
<reference key="1">
    <citation type="submission" date="2008-01" db="EMBL/GenBank/DDBJ databases">
        <title>Complete sequence of chromosome of Caulobacter sp. K31.</title>
        <authorList>
            <consortium name="US DOE Joint Genome Institute"/>
            <person name="Copeland A."/>
            <person name="Lucas S."/>
            <person name="Lapidus A."/>
            <person name="Barry K."/>
            <person name="Glavina del Rio T."/>
            <person name="Dalin E."/>
            <person name="Tice H."/>
            <person name="Pitluck S."/>
            <person name="Bruce D."/>
            <person name="Goodwin L."/>
            <person name="Thompson L.S."/>
            <person name="Brettin T."/>
            <person name="Detter J.C."/>
            <person name="Han C."/>
            <person name="Schmutz J."/>
            <person name="Larimer F."/>
            <person name="Land M."/>
            <person name="Hauser L."/>
            <person name="Kyrpides N."/>
            <person name="Kim E."/>
            <person name="Stephens C."/>
            <person name="Richardson P."/>
        </authorList>
    </citation>
    <scope>NUCLEOTIDE SEQUENCE [LARGE SCALE GENOMIC DNA]</scope>
    <source>
        <strain>K31</strain>
    </source>
</reference>
<keyword id="KW-0648">Protein biosynthesis</keyword>
<keyword id="KW-0808">Transferase</keyword>
<protein>
    <recommendedName>
        <fullName evidence="1">Methionyl-tRNA formyltransferase</fullName>
        <ecNumber evidence="1">2.1.2.9</ecNumber>
    </recommendedName>
</protein>
<name>FMT_CAUSK</name>
<gene>
    <name evidence="1" type="primary">fmt</name>
    <name type="ordered locus">Caul_4568</name>
</gene>
<dbReference type="EC" id="2.1.2.9" evidence="1"/>
<dbReference type="EMBL" id="CP000927">
    <property type="protein sequence ID" value="ABZ73688.1"/>
    <property type="molecule type" value="Genomic_DNA"/>
</dbReference>
<dbReference type="SMR" id="B0T1S7"/>
<dbReference type="STRING" id="366602.Caul_4568"/>
<dbReference type="KEGG" id="cak:Caul_4568"/>
<dbReference type="eggNOG" id="COG0223">
    <property type="taxonomic scope" value="Bacteria"/>
</dbReference>
<dbReference type="HOGENOM" id="CLU_033347_1_2_5"/>
<dbReference type="OrthoDB" id="9802815at2"/>
<dbReference type="GO" id="GO:0005829">
    <property type="term" value="C:cytosol"/>
    <property type="evidence" value="ECO:0007669"/>
    <property type="project" value="TreeGrafter"/>
</dbReference>
<dbReference type="GO" id="GO:0004479">
    <property type="term" value="F:methionyl-tRNA formyltransferase activity"/>
    <property type="evidence" value="ECO:0007669"/>
    <property type="project" value="UniProtKB-UniRule"/>
</dbReference>
<dbReference type="CDD" id="cd08646">
    <property type="entry name" value="FMT_core_Met-tRNA-FMT_N"/>
    <property type="match status" value="1"/>
</dbReference>
<dbReference type="CDD" id="cd08704">
    <property type="entry name" value="Met_tRNA_FMT_C"/>
    <property type="match status" value="1"/>
</dbReference>
<dbReference type="Gene3D" id="3.40.50.12230">
    <property type="match status" value="1"/>
</dbReference>
<dbReference type="HAMAP" id="MF_00182">
    <property type="entry name" value="Formyl_trans"/>
    <property type="match status" value="1"/>
</dbReference>
<dbReference type="InterPro" id="IPR005794">
    <property type="entry name" value="Fmt"/>
</dbReference>
<dbReference type="InterPro" id="IPR005793">
    <property type="entry name" value="Formyl_trans_C"/>
</dbReference>
<dbReference type="InterPro" id="IPR002376">
    <property type="entry name" value="Formyl_transf_N"/>
</dbReference>
<dbReference type="InterPro" id="IPR036477">
    <property type="entry name" value="Formyl_transf_N_sf"/>
</dbReference>
<dbReference type="InterPro" id="IPR011034">
    <property type="entry name" value="Formyl_transferase-like_C_sf"/>
</dbReference>
<dbReference type="InterPro" id="IPR044135">
    <property type="entry name" value="Met-tRNA-FMT_C"/>
</dbReference>
<dbReference type="InterPro" id="IPR041711">
    <property type="entry name" value="Met-tRNA-FMT_N"/>
</dbReference>
<dbReference type="NCBIfam" id="TIGR00460">
    <property type="entry name" value="fmt"/>
    <property type="match status" value="1"/>
</dbReference>
<dbReference type="PANTHER" id="PTHR11138">
    <property type="entry name" value="METHIONYL-TRNA FORMYLTRANSFERASE"/>
    <property type="match status" value="1"/>
</dbReference>
<dbReference type="PANTHER" id="PTHR11138:SF5">
    <property type="entry name" value="METHIONYL-TRNA FORMYLTRANSFERASE, MITOCHONDRIAL"/>
    <property type="match status" value="1"/>
</dbReference>
<dbReference type="Pfam" id="PF02911">
    <property type="entry name" value="Formyl_trans_C"/>
    <property type="match status" value="1"/>
</dbReference>
<dbReference type="Pfam" id="PF00551">
    <property type="entry name" value="Formyl_trans_N"/>
    <property type="match status" value="1"/>
</dbReference>
<dbReference type="SUPFAM" id="SSF50486">
    <property type="entry name" value="FMT C-terminal domain-like"/>
    <property type="match status" value="1"/>
</dbReference>
<dbReference type="SUPFAM" id="SSF53328">
    <property type="entry name" value="Formyltransferase"/>
    <property type="match status" value="1"/>
</dbReference>
<organism>
    <name type="scientific">Caulobacter sp. (strain K31)</name>
    <dbReference type="NCBI Taxonomy" id="366602"/>
    <lineage>
        <taxon>Bacteria</taxon>
        <taxon>Pseudomonadati</taxon>
        <taxon>Pseudomonadota</taxon>
        <taxon>Alphaproteobacteria</taxon>
        <taxon>Caulobacterales</taxon>
        <taxon>Caulobacteraceae</taxon>
        <taxon>Caulobacter</taxon>
    </lineage>
</organism>
<proteinExistence type="inferred from homology"/>